<accession>Q89AP5</accession>
<evidence type="ECO:0000250" key="1"/>
<evidence type="ECO:0000255" key="2"/>
<evidence type="ECO:0000255" key="3">
    <source>
        <dbReference type="PROSITE-ProRule" id="PRU00143"/>
    </source>
</evidence>
<evidence type="ECO:0000305" key="4"/>
<sequence length="465" mass="51086">MKKITMIFNTVLIFLVFLLISGFSWHKSEIPTQEKFFESKSFSLSTVLEKVIPSVVSITVEGNVTQSTRIPRQFQSSFNKKVLDCFGISRCMTRQGKFHALGSGVILDSKNGYIVTNSHVVDRANKIQVQLSNGCKHEAVVIGKDARFDIAIIKLKKVKNLHEIKMSNSDILKVGDYVIAIGNPYGLGETVTSGIISALHRSGLNIENYENFIQTDAAINRGNSGGALVNLKGELIGINTAILTPDGGNIGIGFAIPINMVNNLTTQILEYGQVKQNELGIVGMELNSDLAKVLKINVHRGAFISQVLSKSPADVSGIKPGDVIILLNRKPIASFATLRAEIASFPIKTKIELGILRNKKVKFIIVELKQKIQSKIDSSVLCKLISGASLSNFRIHGQNKGICVNYVNNGTPAYRTGLRKNDIIFEVNKYQVSSLSNFQKVLKTKPLILVLHVKRGNDVLYLVTH</sequence>
<proteinExistence type="inferred from homology"/>
<organism>
    <name type="scientific">Buchnera aphidicola subsp. Baizongia pistaciae (strain Bp)</name>
    <dbReference type="NCBI Taxonomy" id="224915"/>
    <lineage>
        <taxon>Bacteria</taxon>
        <taxon>Pseudomonadati</taxon>
        <taxon>Pseudomonadota</taxon>
        <taxon>Gammaproteobacteria</taxon>
        <taxon>Enterobacterales</taxon>
        <taxon>Erwiniaceae</taxon>
        <taxon>Buchnera</taxon>
    </lineage>
</organism>
<protein>
    <recommendedName>
        <fullName>Probable periplasmic serine endoprotease DegP-like</fullName>
        <ecNumber>3.4.21.107</ecNumber>
    </recommendedName>
    <alternativeName>
        <fullName>Protease Do</fullName>
    </alternativeName>
</protein>
<feature type="signal peptide" evidence="2">
    <location>
        <begin position="1"/>
        <end position="26"/>
    </location>
</feature>
<feature type="chain" id="PRO_0000026929" description="Probable periplasmic serine endoprotease DegP-like">
    <location>
        <begin position="27"/>
        <end position="465"/>
    </location>
</feature>
<feature type="domain" description="PDZ 1" evidence="3">
    <location>
        <begin position="268"/>
        <end position="359"/>
    </location>
</feature>
<feature type="domain" description="PDZ 2" evidence="3">
    <location>
        <begin position="365"/>
        <end position="457"/>
    </location>
</feature>
<feature type="region of interest" description="Serine protease">
    <location>
        <begin position="102"/>
        <end position="240"/>
    </location>
</feature>
<feature type="active site" description="Charge relay system" evidence="2">
    <location>
        <position position="119"/>
    </location>
</feature>
<feature type="active site" description="Charge relay system" evidence="2">
    <location>
        <position position="149"/>
    </location>
</feature>
<feature type="active site" description="Charge relay system" evidence="2">
    <location>
        <position position="224"/>
    </location>
</feature>
<feature type="binding site" evidence="1">
    <location>
        <begin position="222"/>
        <end position="224"/>
    </location>
    <ligand>
        <name>substrate</name>
    </ligand>
</feature>
<feature type="binding site" evidence="1">
    <location>
        <begin position="279"/>
        <end position="283"/>
    </location>
    <ligand>
        <name>substrate</name>
    </ligand>
</feature>
<feature type="disulfide bond" evidence="1">
    <location>
        <begin position="85"/>
        <end position="91"/>
    </location>
</feature>
<keyword id="KW-1015">Disulfide bond</keyword>
<keyword id="KW-0378">Hydrolase</keyword>
<keyword id="KW-0574">Periplasm</keyword>
<keyword id="KW-0645">Protease</keyword>
<keyword id="KW-1185">Reference proteome</keyword>
<keyword id="KW-0677">Repeat</keyword>
<keyword id="KW-0720">Serine protease</keyword>
<keyword id="KW-0732">Signal</keyword>
<keyword id="KW-0346">Stress response</keyword>
<name>DEGPL_BUCBP</name>
<gene>
    <name type="primary">htrA</name>
    <name type="ordered locus">bbp_210</name>
</gene>
<dbReference type="EC" id="3.4.21.107"/>
<dbReference type="EMBL" id="AE016826">
    <property type="protein sequence ID" value="AAO26942.1"/>
    <property type="molecule type" value="Genomic_DNA"/>
</dbReference>
<dbReference type="RefSeq" id="WP_011091343.1">
    <property type="nucleotide sequence ID" value="NC_004545.1"/>
</dbReference>
<dbReference type="SMR" id="Q89AP5"/>
<dbReference type="STRING" id="224915.bbp_210"/>
<dbReference type="KEGG" id="bab:bbp_210"/>
<dbReference type="eggNOG" id="COG0265">
    <property type="taxonomic scope" value="Bacteria"/>
</dbReference>
<dbReference type="HOGENOM" id="CLU_020120_1_1_6"/>
<dbReference type="OrthoDB" id="9758917at2"/>
<dbReference type="Proteomes" id="UP000000601">
    <property type="component" value="Chromosome"/>
</dbReference>
<dbReference type="GO" id="GO:0030288">
    <property type="term" value="C:outer membrane-bounded periplasmic space"/>
    <property type="evidence" value="ECO:0000250"/>
    <property type="project" value="UniProtKB"/>
</dbReference>
<dbReference type="GO" id="GO:0004252">
    <property type="term" value="F:serine-type endopeptidase activity"/>
    <property type="evidence" value="ECO:0000250"/>
    <property type="project" value="UniProtKB"/>
</dbReference>
<dbReference type="GO" id="GO:0043065">
    <property type="term" value="P:positive regulation of apoptotic process"/>
    <property type="evidence" value="ECO:0007669"/>
    <property type="project" value="TreeGrafter"/>
</dbReference>
<dbReference type="GO" id="GO:0012501">
    <property type="term" value="P:programmed cell death"/>
    <property type="evidence" value="ECO:0007669"/>
    <property type="project" value="TreeGrafter"/>
</dbReference>
<dbReference type="GO" id="GO:0006508">
    <property type="term" value="P:proteolysis"/>
    <property type="evidence" value="ECO:0007669"/>
    <property type="project" value="UniProtKB-KW"/>
</dbReference>
<dbReference type="CDD" id="cd10839">
    <property type="entry name" value="cpPDZ1_DegP-like"/>
    <property type="match status" value="1"/>
</dbReference>
<dbReference type="CDD" id="cd23084">
    <property type="entry name" value="cpPDZ2_DegP-like"/>
    <property type="match status" value="1"/>
</dbReference>
<dbReference type="FunFam" id="2.30.42.10:FF:000050">
    <property type="entry name" value="Periplasmic serine endoprotease DegP-like"/>
    <property type="match status" value="1"/>
</dbReference>
<dbReference type="FunFam" id="2.40.10.120:FF:000001">
    <property type="entry name" value="Periplasmic serine endoprotease DegP-like"/>
    <property type="match status" value="1"/>
</dbReference>
<dbReference type="FunFam" id="2.40.10.10:FF:000001">
    <property type="entry name" value="Periplasmic serine protease DegS"/>
    <property type="match status" value="1"/>
</dbReference>
<dbReference type="Gene3D" id="2.30.42.10">
    <property type="match status" value="2"/>
</dbReference>
<dbReference type="Gene3D" id="2.40.10.120">
    <property type="match status" value="1"/>
</dbReference>
<dbReference type="InterPro" id="IPR001478">
    <property type="entry name" value="PDZ"/>
</dbReference>
<dbReference type="InterPro" id="IPR036034">
    <property type="entry name" value="PDZ_sf"/>
</dbReference>
<dbReference type="InterPro" id="IPR011782">
    <property type="entry name" value="Pept_S1C_Do"/>
</dbReference>
<dbReference type="InterPro" id="IPR009003">
    <property type="entry name" value="Peptidase_S1_PA"/>
</dbReference>
<dbReference type="InterPro" id="IPR001940">
    <property type="entry name" value="Peptidase_S1C"/>
</dbReference>
<dbReference type="NCBIfam" id="TIGR02037">
    <property type="entry name" value="degP_htrA_DO"/>
    <property type="match status" value="1"/>
</dbReference>
<dbReference type="PANTHER" id="PTHR22939">
    <property type="entry name" value="SERINE PROTEASE FAMILY S1C HTRA-RELATED"/>
    <property type="match status" value="1"/>
</dbReference>
<dbReference type="PANTHER" id="PTHR22939:SF127">
    <property type="entry name" value="SERINE PROTEASE HTRA2, MITOCHONDRIAL"/>
    <property type="match status" value="1"/>
</dbReference>
<dbReference type="Pfam" id="PF00595">
    <property type="entry name" value="PDZ"/>
    <property type="match status" value="1"/>
</dbReference>
<dbReference type="Pfam" id="PF13180">
    <property type="entry name" value="PDZ_2"/>
    <property type="match status" value="1"/>
</dbReference>
<dbReference type="Pfam" id="PF13365">
    <property type="entry name" value="Trypsin_2"/>
    <property type="match status" value="1"/>
</dbReference>
<dbReference type="PRINTS" id="PR00834">
    <property type="entry name" value="PROTEASES2C"/>
</dbReference>
<dbReference type="SMART" id="SM00228">
    <property type="entry name" value="PDZ"/>
    <property type="match status" value="2"/>
</dbReference>
<dbReference type="SUPFAM" id="SSF50156">
    <property type="entry name" value="PDZ domain-like"/>
    <property type="match status" value="2"/>
</dbReference>
<dbReference type="SUPFAM" id="SSF50494">
    <property type="entry name" value="Trypsin-like serine proteases"/>
    <property type="match status" value="1"/>
</dbReference>
<dbReference type="PROSITE" id="PS50106">
    <property type="entry name" value="PDZ"/>
    <property type="match status" value="2"/>
</dbReference>
<comment type="function">
    <text evidence="1">Might be efficient in the degradation of transiently denatured and unfolded proteins which accumulate in the periplasm following stress conditions.</text>
</comment>
<comment type="catalytic activity">
    <reaction>
        <text>Acts on substrates that are at least partially unfolded. The cleavage site P1 residue is normally between a pair of hydrophobic residues, such as Val-|-Val.</text>
        <dbReference type="EC" id="3.4.21.107"/>
    </reaction>
</comment>
<comment type="subcellular location">
    <subcellularLocation>
        <location evidence="4">Periplasm</location>
    </subcellularLocation>
</comment>
<comment type="similarity">
    <text evidence="4">Belongs to the peptidase S1C family.</text>
</comment>
<reference key="1">
    <citation type="journal article" date="2003" name="Proc. Natl. Acad. Sci. U.S.A.">
        <title>Reductive genome evolution in Buchnera aphidicola.</title>
        <authorList>
            <person name="van Ham R.C.H.J."/>
            <person name="Kamerbeek J."/>
            <person name="Palacios C."/>
            <person name="Rausell C."/>
            <person name="Abascal F."/>
            <person name="Bastolla U."/>
            <person name="Fernandez J.M."/>
            <person name="Jimenez L."/>
            <person name="Postigo M."/>
            <person name="Silva F.J."/>
            <person name="Tamames J."/>
            <person name="Viguera E."/>
            <person name="Latorre A."/>
            <person name="Valencia A."/>
            <person name="Moran F."/>
            <person name="Moya A."/>
        </authorList>
    </citation>
    <scope>NUCLEOTIDE SEQUENCE [LARGE SCALE GENOMIC DNA]</scope>
    <source>
        <strain>Bp</strain>
    </source>
</reference>